<sequence length="141" mass="15736">MNIALIAHDKKKELMVQFAIAYKFILSKHTLYATGTTGRLIQEATGLEVHRFLPGPLGGDQQIGSLIAYNQIDMVIFLRDPLTAQPHEPDVNALLRLCDVHNIPLATNIATAELLIKALDRGDLSWREIVNPKLQKNKSDK</sequence>
<protein>
    <recommendedName>
        <fullName evidence="1">Methylglyoxal synthase</fullName>
        <shortName evidence="1">MGS</shortName>
        <ecNumber evidence="1">4.2.3.3</ecNumber>
    </recommendedName>
</protein>
<accession>B9MRV5</accession>
<evidence type="ECO:0000255" key="1">
    <source>
        <dbReference type="HAMAP-Rule" id="MF_00549"/>
    </source>
</evidence>
<dbReference type="EC" id="4.2.3.3" evidence="1"/>
<dbReference type="EMBL" id="CP001393">
    <property type="protein sequence ID" value="ACM60409.1"/>
    <property type="molecule type" value="Genomic_DNA"/>
</dbReference>
<dbReference type="RefSeq" id="WP_011917393.1">
    <property type="nucleotide sequence ID" value="NC_012034.1"/>
</dbReference>
<dbReference type="SMR" id="B9MRV5"/>
<dbReference type="STRING" id="521460.Athe_1309"/>
<dbReference type="GeneID" id="31772658"/>
<dbReference type="KEGG" id="ate:Athe_1309"/>
<dbReference type="eggNOG" id="COG1803">
    <property type="taxonomic scope" value="Bacteria"/>
</dbReference>
<dbReference type="HOGENOM" id="CLU_120420_1_0_9"/>
<dbReference type="Proteomes" id="UP000007723">
    <property type="component" value="Chromosome"/>
</dbReference>
<dbReference type="GO" id="GO:0005829">
    <property type="term" value="C:cytosol"/>
    <property type="evidence" value="ECO:0007669"/>
    <property type="project" value="TreeGrafter"/>
</dbReference>
<dbReference type="GO" id="GO:0008929">
    <property type="term" value="F:methylglyoxal synthase activity"/>
    <property type="evidence" value="ECO:0007669"/>
    <property type="project" value="UniProtKB-UniRule"/>
</dbReference>
<dbReference type="GO" id="GO:0019242">
    <property type="term" value="P:methylglyoxal biosynthetic process"/>
    <property type="evidence" value="ECO:0007669"/>
    <property type="project" value="UniProtKB-UniRule"/>
</dbReference>
<dbReference type="CDD" id="cd01422">
    <property type="entry name" value="MGS"/>
    <property type="match status" value="1"/>
</dbReference>
<dbReference type="FunFam" id="3.40.50.1380:FF:000006">
    <property type="entry name" value="Methylglyoxal synthase"/>
    <property type="match status" value="1"/>
</dbReference>
<dbReference type="Gene3D" id="3.40.50.1380">
    <property type="entry name" value="Methylglyoxal synthase-like domain"/>
    <property type="match status" value="1"/>
</dbReference>
<dbReference type="HAMAP" id="MF_00549">
    <property type="entry name" value="Methylglyoxal_synth"/>
    <property type="match status" value="1"/>
</dbReference>
<dbReference type="InterPro" id="IPR004363">
    <property type="entry name" value="Methylgl_synth"/>
</dbReference>
<dbReference type="InterPro" id="IPR018148">
    <property type="entry name" value="Methylglyoxal_synth_AS"/>
</dbReference>
<dbReference type="InterPro" id="IPR011607">
    <property type="entry name" value="MGS-like_dom"/>
</dbReference>
<dbReference type="InterPro" id="IPR036914">
    <property type="entry name" value="MGS-like_dom_sf"/>
</dbReference>
<dbReference type="NCBIfam" id="TIGR00160">
    <property type="entry name" value="MGSA"/>
    <property type="match status" value="1"/>
</dbReference>
<dbReference type="NCBIfam" id="NF003559">
    <property type="entry name" value="PRK05234.1"/>
    <property type="match status" value="1"/>
</dbReference>
<dbReference type="PANTHER" id="PTHR30492">
    <property type="entry name" value="METHYLGLYOXAL SYNTHASE"/>
    <property type="match status" value="1"/>
</dbReference>
<dbReference type="PANTHER" id="PTHR30492:SF0">
    <property type="entry name" value="METHYLGLYOXAL SYNTHASE"/>
    <property type="match status" value="1"/>
</dbReference>
<dbReference type="Pfam" id="PF02142">
    <property type="entry name" value="MGS"/>
    <property type="match status" value="1"/>
</dbReference>
<dbReference type="PIRSF" id="PIRSF006614">
    <property type="entry name" value="Methylglyox_syn"/>
    <property type="match status" value="1"/>
</dbReference>
<dbReference type="SMART" id="SM00851">
    <property type="entry name" value="MGS"/>
    <property type="match status" value="1"/>
</dbReference>
<dbReference type="SUPFAM" id="SSF52335">
    <property type="entry name" value="Methylglyoxal synthase-like"/>
    <property type="match status" value="1"/>
</dbReference>
<dbReference type="PROSITE" id="PS01335">
    <property type="entry name" value="METHYLGLYOXAL_SYNTH"/>
    <property type="match status" value="1"/>
</dbReference>
<dbReference type="PROSITE" id="PS51855">
    <property type="entry name" value="MGS"/>
    <property type="match status" value="1"/>
</dbReference>
<name>MGSA_CALBD</name>
<comment type="function">
    <text evidence="1">Catalyzes the formation of methylglyoxal from dihydroxyacetone phosphate.</text>
</comment>
<comment type="catalytic activity">
    <reaction evidence="1">
        <text>dihydroxyacetone phosphate = methylglyoxal + phosphate</text>
        <dbReference type="Rhea" id="RHEA:17937"/>
        <dbReference type="ChEBI" id="CHEBI:17158"/>
        <dbReference type="ChEBI" id="CHEBI:43474"/>
        <dbReference type="ChEBI" id="CHEBI:57642"/>
        <dbReference type="EC" id="4.2.3.3"/>
    </reaction>
</comment>
<comment type="similarity">
    <text evidence="1">Belongs to the methylglyoxal synthase family.</text>
</comment>
<feature type="chain" id="PRO_1000146616" description="Methylglyoxal synthase">
    <location>
        <begin position="1"/>
        <end position="141"/>
    </location>
</feature>
<feature type="domain" description="MGS-like" evidence="1">
    <location>
        <begin position="1"/>
        <end position="141"/>
    </location>
</feature>
<feature type="active site" description="Proton donor/acceptor" evidence="1">
    <location>
        <position position="60"/>
    </location>
</feature>
<feature type="binding site" evidence="1">
    <location>
        <position position="8"/>
    </location>
    <ligand>
        <name>substrate</name>
    </ligand>
</feature>
<feature type="binding site" evidence="1">
    <location>
        <position position="12"/>
    </location>
    <ligand>
        <name>substrate</name>
    </ligand>
</feature>
<feature type="binding site" evidence="1">
    <location>
        <begin position="34"/>
        <end position="37"/>
    </location>
    <ligand>
        <name>substrate</name>
    </ligand>
</feature>
<feature type="binding site" evidence="1">
    <location>
        <position position="87"/>
    </location>
    <ligand>
        <name>substrate</name>
    </ligand>
</feature>
<organism>
    <name type="scientific">Caldicellulosiruptor bescii (strain ATCC BAA-1888 / DSM 6725 / KCTC 15123 / Z-1320)</name>
    <name type="common">Anaerocellum thermophilum</name>
    <dbReference type="NCBI Taxonomy" id="521460"/>
    <lineage>
        <taxon>Bacteria</taxon>
        <taxon>Bacillati</taxon>
        <taxon>Bacillota</taxon>
        <taxon>Bacillota incertae sedis</taxon>
        <taxon>Caldicellulosiruptorales</taxon>
        <taxon>Caldicellulosiruptoraceae</taxon>
        <taxon>Caldicellulosiruptor</taxon>
    </lineage>
</organism>
<proteinExistence type="inferred from homology"/>
<keyword id="KW-0456">Lyase</keyword>
<gene>
    <name evidence="1" type="primary">mgsA</name>
    <name type="ordered locus">Athe_1309</name>
</gene>
<reference key="1">
    <citation type="submission" date="2009-01" db="EMBL/GenBank/DDBJ databases">
        <title>Complete sequence of chromosome of Caldicellulosiruptor becscii DSM 6725.</title>
        <authorList>
            <person name="Lucas S."/>
            <person name="Copeland A."/>
            <person name="Lapidus A."/>
            <person name="Glavina del Rio T."/>
            <person name="Tice H."/>
            <person name="Bruce D."/>
            <person name="Goodwin L."/>
            <person name="Pitluck S."/>
            <person name="Sims D."/>
            <person name="Meincke L."/>
            <person name="Brettin T."/>
            <person name="Detter J.C."/>
            <person name="Han C."/>
            <person name="Larimer F."/>
            <person name="Land M."/>
            <person name="Hauser L."/>
            <person name="Kyrpides N."/>
            <person name="Ovchinnikova G."/>
            <person name="Kataeva I."/>
            <person name="Adams M.W.W."/>
        </authorList>
    </citation>
    <scope>NUCLEOTIDE SEQUENCE [LARGE SCALE GENOMIC DNA]</scope>
    <source>
        <strain>ATCC BAA-1888 / DSM 6725 / KCTC 15123 / Z-1320</strain>
    </source>
</reference>